<organism>
    <name type="scientific">Levilactobacillus brevis (strain ATCC 367 / BCRC 12310 / CIP 105137 / JCM 1170 / LMG 11437 / NCIMB 947 / NCTC 947)</name>
    <name type="common">Lactobacillus brevis</name>
    <dbReference type="NCBI Taxonomy" id="387344"/>
    <lineage>
        <taxon>Bacteria</taxon>
        <taxon>Bacillati</taxon>
        <taxon>Bacillota</taxon>
        <taxon>Bacilli</taxon>
        <taxon>Lactobacillales</taxon>
        <taxon>Lactobacillaceae</taxon>
        <taxon>Levilactobacillus</taxon>
    </lineage>
</organism>
<name>RS3_LEVBA</name>
<feature type="chain" id="PRO_0000293806" description="Small ribosomal subunit protein uS3">
    <location>
        <begin position="1"/>
        <end position="219"/>
    </location>
</feature>
<feature type="domain" description="KH type-2" evidence="1">
    <location>
        <begin position="38"/>
        <end position="106"/>
    </location>
</feature>
<protein>
    <recommendedName>
        <fullName evidence="1">Small ribosomal subunit protein uS3</fullName>
    </recommendedName>
    <alternativeName>
        <fullName evidence="2">30S ribosomal protein S3</fullName>
    </alternativeName>
</protein>
<evidence type="ECO:0000255" key="1">
    <source>
        <dbReference type="HAMAP-Rule" id="MF_01309"/>
    </source>
</evidence>
<evidence type="ECO:0000305" key="2"/>
<keyword id="KW-1185">Reference proteome</keyword>
<keyword id="KW-0687">Ribonucleoprotein</keyword>
<keyword id="KW-0689">Ribosomal protein</keyword>
<keyword id="KW-0694">RNA-binding</keyword>
<keyword id="KW-0699">rRNA-binding</keyword>
<comment type="function">
    <text evidence="1">Binds the lower part of the 30S subunit head. Binds mRNA in the 70S ribosome, positioning it for translation.</text>
</comment>
<comment type="subunit">
    <text evidence="1">Part of the 30S ribosomal subunit. Forms a tight complex with proteins S10 and S14.</text>
</comment>
<comment type="similarity">
    <text evidence="1">Belongs to the universal ribosomal protein uS3 family.</text>
</comment>
<proteinExistence type="inferred from homology"/>
<gene>
    <name evidence="1" type="primary">rpsC</name>
    <name type="ordered locus">LVIS_1684</name>
</gene>
<accession>Q03PW3</accession>
<dbReference type="EMBL" id="CP000416">
    <property type="protein sequence ID" value="ABJ64759.1"/>
    <property type="molecule type" value="Genomic_DNA"/>
</dbReference>
<dbReference type="RefSeq" id="WP_011668493.1">
    <property type="nucleotide sequence ID" value="NC_008497.1"/>
</dbReference>
<dbReference type="SMR" id="Q03PW3"/>
<dbReference type="STRING" id="387344.LVIS_1684"/>
<dbReference type="GeneID" id="56993545"/>
<dbReference type="KEGG" id="lbr:LVIS_1684"/>
<dbReference type="eggNOG" id="COG0092">
    <property type="taxonomic scope" value="Bacteria"/>
</dbReference>
<dbReference type="HOGENOM" id="CLU_058591_0_2_9"/>
<dbReference type="Proteomes" id="UP000001652">
    <property type="component" value="Chromosome"/>
</dbReference>
<dbReference type="GO" id="GO:0022627">
    <property type="term" value="C:cytosolic small ribosomal subunit"/>
    <property type="evidence" value="ECO:0007669"/>
    <property type="project" value="TreeGrafter"/>
</dbReference>
<dbReference type="GO" id="GO:0003729">
    <property type="term" value="F:mRNA binding"/>
    <property type="evidence" value="ECO:0007669"/>
    <property type="project" value="UniProtKB-UniRule"/>
</dbReference>
<dbReference type="GO" id="GO:0019843">
    <property type="term" value="F:rRNA binding"/>
    <property type="evidence" value="ECO:0007669"/>
    <property type="project" value="UniProtKB-UniRule"/>
</dbReference>
<dbReference type="GO" id="GO:0003735">
    <property type="term" value="F:structural constituent of ribosome"/>
    <property type="evidence" value="ECO:0007669"/>
    <property type="project" value="InterPro"/>
</dbReference>
<dbReference type="GO" id="GO:0006412">
    <property type="term" value="P:translation"/>
    <property type="evidence" value="ECO:0007669"/>
    <property type="project" value="UniProtKB-UniRule"/>
</dbReference>
<dbReference type="CDD" id="cd02412">
    <property type="entry name" value="KH-II_30S_S3"/>
    <property type="match status" value="1"/>
</dbReference>
<dbReference type="FunFam" id="3.30.300.20:FF:000001">
    <property type="entry name" value="30S ribosomal protein S3"/>
    <property type="match status" value="1"/>
</dbReference>
<dbReference type="Gene3D" id="3.30.300.20">
    <property type="match status" value="1"/>
</dbReference>
<dbReference type="Gene3D" id="3.30.1140.32">
    <property type="entry name" value="Ribosomal protein S3, C-terminal domain"/>
    <property type="match status" value="1"/>
</dbReference>
<dbReference type="HAMAP" id="MF_01309_B">
    <property type="entry name" value="Ribosomal_uS3_B"/>
    <property type="match status" value="1"/>
</dbReference>
<dbReference type="InterPro" id="IPR004087">
    <property type="entry name" value="KH_dom"/>
</dbReference>
<dbReference type="InterPro" id="IPR015946">
    <property type="entry name" value="KH_dom-like_a/b"/>
</dbReference>
<dbReference type="InterPro" id="IPR004044">
    <property type="entry name" value="KH_dom_type_2"/>
</dbReference>
<dbReference type="InterPro" id="IPR009019">
    <property type="entry name" value="KH_sf_prok-type"/>
</dbReference>
<dbReference type="InterPro" id="IPR036419">
    <property type="entry name" value="Ribosomal_S3_C_sf"/>
</dbReference>
<dbReference type="InterPro" id="IPR005704">
    <property type="entry name" value="Ribosomal_uS3_bac-typ"/>
</dbReference>
<dbReference type="InterPro" id="IPR001351">
    <property type="entry name" value="Ribosomal_uS3_C"/>
</dbReference>
<dbReference type="InterPro" id="IPR018280">
    <property type="entry name" value="Ribosomal_uS3_CS"/>
</dbReference>
<dbReference type="NCBIfam" id="TIGR01009">
    <property type="entry name" value="rpsC_bact"/>
    <property type="match status" value="1"/>
</dbReference>
<dbReference type="PANTHER" id="PTHR11760">
    <property type="entry name" value="30S/40S RIBOSOMAL PROTEIN S3"/>
    <property type="match status" value="1"/>
</dbReference>
<dbReference type="PANTHER" id="PTHR11760:SF19">
    <property type="entry name" value="SMALL RIBOSOMAL SUBUNIT PROTEIN US3C"/>
    <property type="match status" value="1"/>
</dbReference>
<dbReference type="Pfam" id="PF07650">
    <property type="entry name" value="KH_2"/>
    <property type="match status" value="1"/>
</dbReference>
<dbReference type="Pfam" id="PF00189">
    <property type="entry name" value="Ribosomal_S3_C"/>
    <property type="match status" value="1"/>
</dbReference>
<dbReference type="SMART" id="SM00322">
    <property type="entry name" value="KH"/>
    <property type="match status" value="1"/>
</dbReference>
<dbReference type="SUPFAM" id="SSF54814">
    <property type="entry name" value="Prokaryotic type KH domain (KH-domain type II)"/>
    <property type="match status" value="1"/>
</dbReference>
<dbReference type="SUPFAM" id="SSF54821">
    <property type="entry name" value="Ribosomal protein S3 C-terminal domain"/>
    <property type="match status" value="1"/>
</dbReference>
<dbReference type="PROSITE" id="PS50823">
    <property type="entry name" value="KH_TYPE_2"/>
    <property type="match status" value="1"/>
</dbReference>
<dbReference type="PROSITE" id="PS00548">
    <property type="entry name" value="RIBOSOMAL_S3"/>
    <property type="match status" value="1"/>
</dbReference>
<sequence>MGQKVNPTGLRVGIIRDWEAKWYAEKDFAAYLKEDLQIRKFIEKRLVDASVSTVEIERAANRVNISIHTAKPGMVIGKGGSEVENLRKELNDLTGKRVHINIVEIKKPDLDAKLVGENIARQLEGRVAFRRAMRGTMQRTMRSGAKGIKTQVAGRLNGADMSRVESYAEGTVPLHTLRADIDYAWVEAHTTYGSLGVKTWIYRGEILPEKKQSNGQGGK</sequence>
<reference key="1">
    <citation type="journal article" date="2006" name="Proc. Natl. Acad. Sci. U.S.A.">
        <title>Comparative genomics of the lactic acid bacteria.</title>
        <authorList>
            <person name="Makarova K.S."/>
            <person name="Slesarev A."/>
            <person name="Wolf Y.I."/>
            <person name="Sorokin A."/>
            <person name="Mirkin B."/>
            <person name="Koonin E.V."/>
            <person name="Pavlov A."/>
            <person name="Pavlova N."/>
            <person name="Karamychev V."/>
            <person name="Polouchine N."/>
            <person name="Shakhova V."/>
            <person name="Grigoriev I."/>
            <person name="Lou Y."/>
            <person name="Rohksar D."/>
            <person name="Lucas S."/>
            <person name="Huang K."/>
            <person name="Goodstein D.M."/>
            <person name="Hawkins T."/>
            <person name="Plengvidhya V."/>
            <person name="Welker D."/>
            <person name="Hughes J."/>
            <person name="Goh Y."/>
            <person name="Benson A."/>
            <person name="Baldwin K."/>
            <person name="Lee J.-H."/>
            <person name="Diaz-Muniz I."/>
            <person name="Dosti B."/>
            <person name="Smeianov V."/>
            <person name="Wechter W."/>
            <person name="Barabote R."/>
            <person name="Lorca G."/>
            <person name="Altermann E."/>
            <person name="Barrangou R."/>
            <person name="Ganesan B."/>
            <person name="Xie Y."/>
            <person name="Rawsthorne H."/>
            <person name="Tamir D."/>
            <person name="Parker C."/>
            <person name="Breidt F."/>
            <person name="Broadbent J.R."/>
            <person name="Hutkins R."/>
            <person name="O'Sullivan D."/>
            <person name="Steele J."/>
            <person name="Unlu G."/>
            <person name="Saier M.H. Jr."/>
            <person name="Klaenhammer T."/>
            <person name="Richardson P."/>
            <person name="Kozyavkin S."/>
            <person name="Weimer B.C."/>
            <person name="Mills D.A."/>
        </authorList>
    </citation>
    <scope>NUCLEOTIDE SEQUENCE [LARGE SCALE GENOMIC DNA]</scope>
    <source>
        <strain>ATCC 367 / BCRC 12310 / CIP 105137 / JCM 1170 / LMG 11437 / NCIMB 947 / NCTC 947</strain>
    </source>
</reference>